<keyword id="KW-0963">Cytoplasm</keyword>
<keyword id="KW-0804">Transcription</keyword>
<keyword id="KW-0805">Transcription regulation</keyword>
<dbReference type="EMBL" id="CP000026">
    <property type="protein sequence ID" value="AAV79754.1"/>
    <property type="molecule type" value="Genomic_DNA"/>
</dbReference>
<dbReference type="RefSeq" id="WP_000934316.1">
    <property type="nucleotide sequence ID" value="NC_006511.1"/>
</dbReference>
<dbReference type="SMR" id="Q5PKA5"/>
<dbReference type="KEGG" id="spt:SPA4002"/>
<dbReference type="HOGENOM" id="CLU_142729_0_0_6"/>
<dbReference type="Proteomes" id="UP000008185">
    <property type="component" value="Chromosome"/>
</dbReference>
<dbReference type="GO" id="GO:0005737">
    <property type="term" value="C:cytoplasm"/>
    <property type="evidence" value="ECO:0007669"/>
    <property type="project" value="UniProtKB-SubCell"/>
</dbReference>
<dbReference type="GO" id="GO:0006355">
    <property type="term" value="P:regulation of DNA-templated transcription"/>
    <property type="evidence" value="ECO:0007669"/>
    <property type="project" value="InterPro"/>
</dbReference>
<dbReference type="FunFam" id="1.20.120.1370:FF:000001">
    <property type="entry name" value="Regulator of sigma D"/>
    <property type="match status" value="1"/>
</dbReference>
<dbReference type="Gene3D" id="1.20.120.1370">
    <property type="entry name" value="Regulator of RNA polymerase sigma(70) subunit, domain 4"/>
    <property type="match status" value="1"/>
</dbReference>
<dbReference type="HAMAP" id="MF_01181">
    <property type="entry name" value="Rsd"/>
    <property type="match status" value="1"/>
</dbReference>
<dbReference type="InterPro" id="IPR038309">
    <property type="entry name" value="Rsd/AlgQ_sf"/>
</dbReference>
<dbReference type="InterPro" id="IPR023785">
    <property type="entry name" value="Sigma70_reg_Rsd"/>
</dbReference>
<dbReference type="InterPro" id="IPR007448">
    <property type="entry name" value="Sigma70_reg_Rsd_AlgQ"/>
</dbReference>
<dbReference type="NCBIfam" id="NF008723">
    <property type="entry name" value="PRK11718.1"/>
    <property type="match status" value="1"/>
</dbReference>
<dbReference type="Pfam" id="PF04353">
    <property type="entry name" value="Rsd_AlgQ"/>
    <property type="match status" value="1"/>
</dbReference>
<dbReference type="PIRSF" id="PIRSF016548">
    <property type="entry name" value="Rsd_AlgQ"/>
    <property type="match status" value="1"/>
</dbReference>
<reference key="1">
    <citation type="journal article" date="2004" name="Nat. Genet.">
        <title>Comparison of genome degradation in Paratyphi A and Typhi, human-restricted serovars of Salmonella enterica that cause typhoid.</title>
        <authorList>
            <person name="McClelland M."/>
            <person name="Sanderson K.E."/>
            <person name="Clifton S.W."/>
            <person name="Latreille P."/>
            <person name="Porwollik S."/>
            <person name="Sabo A."/>
            <person name="Meyer R."/>
            <person name="Bieri T."/>
            <person name="Ozersky P."/>
            <person name="McLellan M."/>
            <person name="Harkins C.R."/>
            <person name="Wang C."/>
            <person name="Nguyen C."/>
            <person name="Berghoff A."/>
            <person name="Elliott G."/>
            <person name="Kohlberg S."/>
            <person name="Strong C."/>
            <person name="Du F."/>
            <person name="Carter J."/>
            <person name="Kremizki C."/>
            <person name="Layman D."/>
            <person name="Leonard S."/>
            <person name="Sun H."/>
            <person name="Fulton L."/>
            <person name="Nash W."/>
            <person name="Miner T."/>
            <person name="Minx P."/>
            <person name="Delehaunty K."/>
            <person name="Fronick C."/>
            <person name="Magrini V."/>
            <person name="Nhan M."/>
            <person name="Warren W."/>
            <person name="Florea L."/>
            <person name="Spieth J."/>
            <person name="Wilson R.K."/>
        </authorList>
    </citation>
    <scope>NUCLEOTIDE SEQUENCE [LARGE SCALE GENOMIC DNA]</scope>
    <source>
        <strain>ATCC 9150 / SARB42</strain>
    </source>
</reference>
<name>RSD_SALPA</name>
<sequence length="162" mass="18706">MLNQLENLTERVGGSNKLVDRWLDVRKHLLVAYYNLVGIKPGKESYMRLNEKALDDFCQSLVDYLSAGHFSIYERILHKLEGNGQLLHAAKIWPLLEDNTQRIMDYYDTSLETAIDHDNRLEFQQALSDIGEALEARFVLEDKLIMLVFDAMHDGARVKRPA</sequence>
<protein>
    <recommendedName>
        <fullName evidence="1">Regulator of sigma D</fullName>
    </recommendedName>
</protein>
<feature type="chain" id="PRO_0000268885" description="Regulator of sigma D">
    <location>
        <begin position="1"/>
        <end position="162"/>
    </location>
</feature>
<evidence type="ECO:0000255" key="1">
    <source>
        <dbReference type="HAMAP-Rule" id="MF_01181"/>
    </source>
</evidence>
<gene>
    <name evidence="1" type="primary">rsd</name>
    <name type="ordered locus">SPA4002</name>
</gene>
<accession>Q5PKA5</accession>
<proteinExistence type="inferred from homology"/>
<organism>
    <name type="scientific">Salmonella paratyphi A (strain ATCC 9150 / SARB42)</name>
    <dbReference type="NCBI Taxonomy" id="295319"/>
    <lineage>
        <taxon>Bacteria</taxon>
        <taxon>Pseudomonadati</taxon>
        <taxon>Pseudomonadota</taxon>
        <taxon>Gammaproteobacteria</taxon>
        <taxon>Enterobacterales</taxon>
        <taxon>Enterobacteriaceae</taxon>
        <taxon>Salmonella</taxon>
    </lineage>
</organism>
<comment type="function">
    <text evidence="1">Binds RpoD and negatively regulates RpoD-mediated transcription activation by preventing the interaction between the primary sigma factor RpoD with the catalytic core of the RNA polymerase and with promoter DNA. May be involved in replacement of the RNA polymerase sigma subunit from RpoD to RpoS during the transition from exponential growth to the stationary phase.</text>
</comment>
<comment type="subunit">
    <text evidence="1">Interacts with RpoD.</text>
</comment>
<comment type="subcellular location">
    <subcellularLocation>
        <location evidence="1">Cytoplasm</location>
    </subcellularLocation>
</comment>
<comment type="similarity">
    <text evidence="1">Belongs to the Rsd/AlgQ family.</text>
</comment>